<sequence>GIWGTALKWGVKLLPKLVGMAQTKKQ</sequence>
<dbReference type="GO" id="GO:0005576">
    <property type="term" value="C:extracellular region"/>
    <property type="evidence" value="ECO:0007669"/>
    <property type="project" value="UniProtKB-SubCell"/>
</dbReference>
<dbReference type="GO" id="GO:0016020">
    <property type="term" value="C:membrane"/>
    <property type="evidence" value="ECO:0007669"/>
    <property type="project" value="UniProtKB-KW"/>
</dbReference>
<dbReference type="GO" id="GO:0044218">
    <property type="term" value="C:other organism cell membrane"/>
    <property type="evidence" value="ECO:0007669"/>
    <property type="project" value="UniProtKB-KW"/>
</dbReference>
<dbReference type="GO" id="GO:0090729">
    <property type="term" value="F:toxin activity"/>
    <property type="evidence" value="ECO:0007669"/>
    <property type="project" value="UniProtKB-KW"/>
</dbReference>
<dbReference type="GO" id="GO:0042742">
    <property type="term" value="P:defense response to bacterium"/>
    <property type="evidence" value="ECO:0007669"/>
    <property type="project" value="UniProtKB-KW"/>
</dbReference>
<dbReference type="GO" id="GO:0050832">
    <property type="term" value="P:defense response to fungus"/>
    <property type="evidence" value="ECO:0007669"/>
    <property type="project" value="UniProtKB-KW"/>
</dbReference>
<dbReference type="GO" id="GO:0031640">
    <property type="term" value="P:killing of cells of another organism"/>
    <property type="evidence" value="ECO:0007669"/>
    <property type="project" value="UniProtKB-KW"/>
</dbReference>
<dbReference type="InterPro" id="IPR012523">
    <property type="entry name" value="Antimicrobial_4"/>
</dbReference>
<dbReference type="Pfam" id="PF08024">
    <property type="entry name" value="Antimicrobial_4"/>
    <property type="match status" value="1"/>
</dbReference>
<reference key="1">
    <citation type="journal article" date="2001" name="J. Biol. Chem.">
        <title>Ponericins, new antibacterial and insecticidal peptides from the venom of the ant Pachycondyla goeldii.</title>
        <authorList>
            <person name="Orivel J."/>
            <person name="Redeker V."/>
            <person name="Le Caer J.-P."/>
            <person name="Krier F."/>
            <person name="Revol-Junelles A.-M."/>
            <person name="Longeon A."/>
            <person name="Chafotte A."/>
            <person name="Dejean A."/>
            <person name="Rossier J."/>
        </authorList>
    </citation>
    <scope>PROTEIN SEQUENCE</scope>
    <scope>FUNCTION</scope>
    <scope>MASS SPECTROMETRY</scope>
    <scope>SUBCELLULAR LOCATION</scope>
    <source>
        <tissue>Venom</tissue>
    </source>
</reference>
<reference key="2">
    <citation type="journal article" date="2016" name="Toxins">
        <title>The biochemical toxin arsenal from ant venoms.</title>
        <authorList>
            <person name="Touchard A."/>
            <person name="Aili S.R."/>
            <person name="Fox E.G."/>
            <person name="Escoubas P."/>
            <person name="Orivel J."/>
            <person name="Nicholson G.M."/>
            <person name="Dejean A."/>
        </authorList>
    </citation>
    <scope>REVIEW</scope>
    <scope>NOMENCLATURE</scope>
</reference>
<keyword id="KW-0044">Antibiotic</keyword>
<keyword id="KW-0929">Antimicrobial</keyword>
<keyword id="KW-0204">Cytolysis</keyword>
<keyword id="KW-0903">Direct protein sequencing</keyword>
<keyword id="KW-0295">Fungicide</keyword>
<keyword id="KW-0354">Hemolysis</keyword>
<keyword id="KW-0472">Membrane</keyword>
<keyword id="KW-0964">Secreted</keyword>
<keyword id="KW-1052">Target cell membrane</keyword>
<keyword id="KW-1053">Target membrane</keyword>
<keyword id="KW-0800">Toxin</keyword>
<proteinExistence type="evidence at protein level"/>
<comment type="function">
    <text evidence="1">Has a broad spectrum of activity against both Gram-positive and Gram-negative bacteria and S.cerevisiae. Has insecticidal and hemolytic activities. May act by disrupting the integrity of the bacterial cell membrane.</text>
</comment>
<comment type="subcellular location">
    <subcellularLocation>
        <location evidence="1">Secreted</location>
    </subcellularLocation>
    <subcellularLocation>
        <location evidence="4">Target cell membrane</location>
    </subcellularLocation>
</comment>
<comment type="tissue specificity">
    <text evidence="5">Expressed by the venom gland.</text>
</comment>
<comment type="mass spectrometry"/>
<comment type="similarity">
    <text evidence="4">Belongs to the non-disulfide-bridged peptide (NDBP) superfamily. Medium-length antimicrobial peptide (group 3) family. Ponericin-W subfamily.</text>
</comment>
<protein>
    <recommendedName>
        <fullName evidence="3">M-poneritoxin-Ng1d</fullName>
        <shortName evidence="3">M-PONTX-Ng1d</shortName>
    </recommendedName>
    <alternativeName>
        <fullName evidence="4">Poneratoxin</fullName>
    </alternativeName>
    <alternativeName>
        <fullName evidence="2">Ponericin-W4</fullName>
    </alternativeName>
</protein>
<evidence type="ECO:0000269" key="1">
    <source>
    </source>
</evidence>
<evidence type="ECO:0000303" key="2">
    <source>
    </source>
</evidence>
<evidence type="ECO:0000303" key="3">
    <source>
    </source>
</evidence>
<evidence type="ECO:0000305" key="4"/>
<evidence type="ECO:0000305" key="5">
    <source>
    </source>
</evidence>
<accession>P82426</accession>
<name>WTX1D_NEOGO</name>
<organism>
    <name type="scientific">Neoponera goeldii</name>
    <name type="common">Ponerine ant</name>
    <name type="synonym">Pachycondyla goeldii</name>
    <dbReference type="NCBI Taxonomy" id="3057131"/>
    <lineage>
        <taxon>Eukaryota</taxon>
        <taxon>Metazoa</taxon>
        <taxon>Ecdysozoa</taxon>
        <taxon>Arthropoda</taxon>
        <taxon>Hexapoda</taxon>
        <taxon>Insecta</taxon>
        <taxon>Pterygota</taxon>
        <taxon>Neoptera</taxon>
        <taxon>Endopterygota</taxon>
        <taxon>Hymenoptera</taxon>
        <taxon>Apocrita</taxon>
        <taxon>Aculeata</taxon>
        <taxon>Formicoidea</taxon>
        <taxon>Formicidae</taxon>
        <taxon>Ponerinae</taxon>
        <taxon>Ponerini</taxon>
        <taxon>Neoponera</taxon>
    </lineage>
</organism>
<feature type="peptide" id="PRO_0000044197" description="M-poneritoxin-Ng1d" evidence="1">
    <location>
        <begin position="1"/>
        <end position="26"/>
    </location>
</feature>